<name>RL22_BURO1</name>
<sequence>MEVKAIHRGARISAQKTRLVADQIRGLPVDKALNVLTFSPKKAAGIVKKVVLSAIANAEHNEGADIDELKIKSIYVDKAASLKRFTARAKGRGNRIEKQSCHITVTVGN</sequence>
<comment type="function">
    <text evidence="1">This protein binds specifically to 23S rRNA; its binding is stimulated by other ribosomal proteins, e.g. L4, L17, and L20. It is important during the early stages of 50S assembly. It makes multiple contacts with different domains of the 23S rRNA in the assembled 50S subunit and ribosome (By similarity).</text>
</comment>
<comment type="function">
    <text evidence="1">The globular domain of the protein is located near the polypeptide exit tunnel on the outside of the subunit, while an extended beta-hairpin is found that lines the wall of the exit tunnel in the center of the 70S ribosome.</text>
</comment>
<comment type="subunit">
    <text evidence="1">Part of the 50S ribosomal subunit.</text>
</comment>
<comment type="similarity">
    <text evidence="1">Belongs to the universal ribosomal protein uL22 family.</text>
</comment>
<dbReference type="EMBL" id="CP000378">
    <property type="protein sequence ID" value="ABF77652.1"/>
    <property type="molecule type" value="Genomic_DNA"/>
</dbReference>
<dbReference type="SMR" id="Q1BRV3"/>
<dbReference type="HOGENOM" id="CLU_083987_3_3_4"/>
<dbReference type="GO" id="GO:0022625">
    <property type="term" value="C:cytosolic large ribosomal subunit"/>
    <property type="evidence" value="ECO:0007669"/>
    <property type="project" value="TreeGrafter"/>
</dbReference>
<dbReference type="GO" id="GO:0019843">
    <property type="term" value="F:rRNA binding"/>
    <property type="evidence" value="ECO:0007669"/>
    <property type="project" value="UniProtKB-UniRule"/>
</dbReference>
<dbReference type="GO" id="GO:0003735">
    <property type="term" value="F:structural constituent of ribosome"/>
    <property type="evidence" value="ECO:0007669"/>
    <property type="project" value="InterPro"/>
</dbReference>
<dbReference type="GO" id="GO:0006412">
    <property type="term" value="P:translation"/>
    <property type="evidence" value="ECO:0007669"/>
    <property type="project" value="UniProtKB-UniRule"/>
</dbReference>
<dbReference type="CDD" id="cd00336">
    <property type="entry name" value="Ribosomal_L22"/>
    <property type="match status" value="1"/>
</dbReference>
<dbReference type="FunFam" id="3.90.470.10:FF:000001">
    <property type="entry name" value="50S ribosomal protein L22"/>
    <property type="match status" value="1"/>
</dbReference>
<dbReference type="Gene3D" id="3.90.470.10">
    <property type="entry name" value="Ribosomal protein L22/L17"/>
    <property type="match status" value="1"/>
</dbReference>
<dbReference type="HAMAP" id="MF_01331_B">
    <property type="entry name" value="Ribosomal_uL22_B"/>
    <property type="match status" value="1"/>
</dbReference>
<dbReference type="InterPro" id="IPR001063">
    <property type="entry name" value="Ribosomal_uL22"/>
</dbReference>
<dbReference type="InterPro" id="IPR005727">
    <property type="entry name" value="Ribosomal_uL22_bac/chlpt-type"/>
</dbReference>
<dbReference type="InterPro" id="IPR047867">
    <property type="entry name" value="Ribosomal_uL22_bac/org-type"/>
</dbReference>
<dbReference type="InterPro" id="IPR018260">
    <property type="entry name" value="Ribosomal_uL22_CS"/>
</dbReference>
<dbReference type="InterPro" id="IPR036394">
    <property type="entry name" value="Ribosomal_uL22_sf"/>
</dbReference>
<dbReference type="NCBIfam" id="TIGR01044">
    <property type="entry name" value="rplV_bact"/>
    <property type="match status" value="1"/>
</dbReference>
<dbReference type="PANTHER" id="PTHR13501">
    <property type="entry name" value="CHLOROPLAST 50S RIBOSOMAL PROTEIN L22-RELATED"/>
    <property type="match status" value="1"/>
</dbReference>
<dbReference type="PANTHER" id="PTHR13501:SF8">
    <property type="entry name" value="LARGE RIBOSOMAL SUBUNIT PROTEIN UL22M"/>
    <property type="match status" value="1"/>
</dbReference>
<dbReference type="Pfam" id="PF00237">
    <property type="entry name" value="Ribosomal_L22"/>
    <property type="match status" value="1"/>
</dbReference>
<dbReference type="SUPFAM" id="SSF54843">
    <property type="entry name" value="Ribosomal protein L22"/>
    <property type="match status" value="1"/>
</dbReference>
<dbReference type="PROSITE" id="PS00464">
    <property type="entry name" value="RIBOSOMAL_L22"/>
    <property type="match status" value="1"/>
</dbReference>
<keyword id="KW-0687">Ribonucleoprotein</keyword>
<keyword id="KW-0689">Ribosomal protein</keyword>
<keyword id="KW-0694">RNA-binding</keyword>
<keyword id="KW-0699">rRNA-binding</keyword>
<protein>
    <recommendedName>
        <fullName evidence="1">Large ribosomal subunit protein uL22</fullName>
    </recommendedName>
    <alternativeName>
        <fullName evidence="2">50S ribosomal protein L22</fullName>
    </alternativeName>
</protein>
<feature type="chain" id="PRO_1000052543" description="Large ribosomal subunit protein uL22">
    <location>
        <begin position="1"/>
        <end position="109"/>
    </location>
</feature>
<reference key="1">
    <citation type="submission" date="2006-05" db="EMBL/GenBank/DDBJ databases">
        <title>Complete sequence of chromosome 1 of Burkholderia cenocepacia AU 1054.</title>
        <authorList>
            <consortium name="US DOE Joint Genome Institute"/>
            <person name="Copeland A."/>
            <person name="Lucas S."/>
            <person name="Lapidus A."/>
            <person name="Barry K."/>
            <person name="Detter J.C."/>
            <person name="Glavina del Rio T."/>
            <person name="Hammon N."/>
            <person name="Israni S."/>
            <person name="Dalin E."/>
            <person name="Tice H."/>
            <person name="Pitluck S."/>
            <person name="Chain P."/>
            <person name="Malfatti S."/>
            <person name="Shin M."/>
            <person name="Vergez L."/>
            <person name="Schmutz J."/>
            <person name="Larimer F."/>
            <person name="Land M."/>
            <person name="Hauser L."/>
            <person name="Kyrpides N."/>
            <person name="Lykidis A."/>
            <person name="LiPuma J.J."/>
            <person name="Konstantinidis K."/>
            <person name="Tiedje J.M."/>
            <person name="Richardson P."/>
        </authorList>
    </citation>
    <scope>NUCLEOTIDE SEQUENCE [LARGE SCALE GENOMIC DNA]</scope>
    <source>
        <strain>AU 1054</strain>
    </source>
</reference>
<accession>Q1BRV3</accession>
<organism>
    <name type="scientific">Burkholderia orbicola (strain AU 1054)</name>
    <dbReference type="NCBI Taxonomy" id="331271"/>
    <lineage>
        <taxon>Bacteria</taxon>
        <taxon>Pseudomonadati</taxon>
        <taxon>Pseudomonadota</taxon>
        <taxon>Betaproteobacteria</taxon>
        <taxon>Burkholderiales</taxon>
        <taxon>Burkholderiaceae</taxon>
        <taxon>Burkholderia</taxon>
        <taxon>Burkholderia cepacia complex</taxon>
        <taxon>Burkholderia orbicola</taxon>
    </lineage>
</organism>
<evidence type="ECO:0000255" key="1">
    <source>
        <dbReference type="HAMAP-Rule" id="MF_01331"/>
    </source>
</evidence>
<evidence type="ECO:0000305" key="2"/>
<proteinExistence type="inferred from homology"/>
<gene>
    <name evidence="1" type="primary">rplV</name>
    <name type="ordered locus">Bcen_2754</name>
</gene>